<dbReference type="EC" id="3.4.-.-"/>
<dbReference type="EC" id="3.5.1.119" evidence="2"/>
<dbReference type="EMBL" id="CP000480">
    <property type="protein sequence ID" value="ABK71414.1"/>
    <property type="molecule type" value="Genomic_DNA"/>
</dbReference>
<dbReference type="EMBL" id="CP001663">
    <property type="protein sequence ID" value="AFP40265.1"/>
    <property type="molecule type" value="Genomic_DNA"/>
</dbReference>
<dbReference type="RefSeq" id="WP_003895348.1">
    <property type="nucleotide sequence ID" value="NZ_SIJM01000005.1"/>
</dbReference>
<dbReference type="RefSeq" id="YP_888187.1">
    <property type="nucleotide sequence ID" value="NC_008596.1"/>
</dbReference>
<dbReference type="EMDB" id="EMD-45654"/>
<dbReference type="SMR" id="A0QZ49"/>
<dbReference type="STRING" id="246196.MSMEG_3897"/>
<dbReference type="PaxDb" id="246196-MSMEI_3807"/>
<dbReference type="GeneID" id="93458636"/>
<dbReference type="KEGG" id="msb:LJ00_19360"/>
<dbReference type="KEGG" id="msg:MSMEI_3807"/>
<dbReference type="KEGG" id="msm:MSMEG_3897"/>
<dbReference type="PATRIC" id="fig|246196.19.peg.3837"/>
<dbReference type="eggNOG" id="COG4122">
    <property type="taxonomic scope" value="Bacteria"/>
</dbReference>
<dbReference type="OrthoDB" id="9760627at2"/>
<dbReference type="BRENDA" id="3.5.1.119">
    <property type="organism ID" value="3512"/>
</dbReference>
<dbReference type="UniPathway" id="UPA00997"/>
<dbReference type="Proteomes" id="UP000000757">
    <property type="component" value="Chromosome"/>
</dbReference>
<dbReference type="Proteomes" id="UP000006158">
    <property type="component" value="Chromosome"/>
</dbReference>
<dbReference type="GO" id="GO:0005524">
    <property type="term" value="F:ATP binding"/>
    <property type="evidence" value="ECO:0000315"/>
    <property type="project" value="UniProtKB"/>
</dbReference>
<dbReference type="GO" id="GO:0016811">
    <property type="term" value="F:hydrolase activity, acting on carbon-nitrogen (but not peptide) bonds, in linear amides"/>
    <property type="evidence" value="ECO:0000315"/>
    <property type="project" value="UniProtKB"/>
</dbReference>
<dbReference type="GO" id="GO:0046872">
    <property type="term" value="F:metal ion binding"/>
    <property type="evidence" value="ECO:0007669"/>
    <property type="project" value="UniProtKB-KW"/>
</dbReference>
<dbReference type="GO" id="GO:0008233">
    <property type="term" value="F:peptidase activity"/>
    <property type="evidence" value="ECO:0007669"/>
    <property type="project" value="InterPro"/>
</dbReference>
<dbReference type="GO" id="GO:0019941">
    <property type="term" value="P:modification-dependent protein catabolic process"/>
    <property type="evidence" value="ECO:0000315"/>
    <property type="project" value="UniProtKB"/>
</dbReference>
<dbReference type="GO" id="GO:0010498">
    <property type="term" value="P:proteasomal protein catabolic process"/>
    <property type="evidence" value="ECO:0000315"/>
    <property type="project" value="UniProtKB"/>
</dbReference>
<dbReference type="GO" id="GO:0070490">
    <property type="term" value="P:protein pupylation"/>
    <property type="evidence" value="ECO:0000315"/>
    <property type="project" value="UniProtKB"/>
</dbReference>
<dbReference type="InterPro" id="IPR022366">
    <property type="entry name" value="Pup_deamidase"/>
</dbReference>
<dbReference type="InterPro" id="IPR004347">
    <property type="entry name" value="Pup_ligase/deamidase"/>
</dbReference>
<dbReference type="NCBIfam" id="TIGR03688">
    <property type="entry name" value="depupylase_Dop"/>
    <property type="match status" value="1"/>
</dbReference>
<dbReference type="PANTHER" id="PTHR42307">
    <property type="entry name" value="PUP DEAMIDASE/DEPUPYLASE"/>
    <property type="match status" value="1"/>
</dbReference>
<dbReference type="PANTHER" id="PTHR42307:SF2">
    <property type="entry name" value="PUP DEAMIDASE_DEPUPYLASE"/>
    <property type="match status" value="1"/>
</dbReference>
<dbReference type="Pfam" id="PF03136">
    <property type="entry name" value="Pup_ligase"/>
    <property type="match status" value="1"/>
</dbReference>
<dbReference type="PIRSF" id="PIRSF018077">
    <property type="entry name" value="UCP018077"/>
    <property type="match status" value="1"/>
</dbReference>
<protein>
    <recommendedName>
        <fullName>Pup deamidase/depupylase</fullName>
        <ecNumber>3.4.-.-</ecNumber>
        <ecNumber evidence="2">3.5.1.119</ecNumber>
    </recommendedName>
    <alternativeName>
        <fullName>Deamidase of protein Pup</fullName>
    </alternativeName>
</protein>
<reference key="1">
    <citation type="submission" date="2006-10" db="EMBL/GenBank/DDBJ databases">
        <authorList>
            <person name="Fleischmann R.D."/>
            <person name="Dodson R.J."/>
            <person name="Haft D.H."/>
            <person name="Merkel J.S."/>
            <person name="Nelson W.C."/>
            <person name="Fraser C.M."/>
        </authorList>
    </citation>
    <scope>NUCLEOTIDE SEQUENCE [LARGE SCALE GENOMIC DNA]</scope>
    <source>
        <strain>ATCC 700084 / mc(2)155</strain>
    </source>
</reference>
<reference key="2">
    <citation type="journal article" date="2007" name="Genome Biol.">
        <title>Interrupted coding sequences in Mycobacterium smegmatis: authentic mutations or sequencing errors?</title>
        <authorList>
            <person name="Deshayes C."/>
            <person name="Perrodou E."/>
            <person name="Gallien S."/>
            <person name="Euphrasie D."/>
            <person name="Schaeffer C."/>
            <person name="Van-Dorsselaer A."/>
            <person name="Poch O."/>
            <person name="Lecompte O."/>
            <person name="Reyrat J.-M."/>
        </authorList>
    </citation>
    <scope>NUCLEOTIDE SEQUENCE [LARGE SCALE GENOMIC DNA]</scope>
    <source>
        <strain>ATCC 700084 / mc(2)155</strain>
    </source>
</reference>
<reference key="3">
    <citation type="journal article" date="2009" name="Genome Res.">
        <title>Ortho-proteogenomics: multiple proteomes investigation through orthology and a new MS-based protocol.</title>
        <authorList>
            <person name="Gallien S."/>
            <person name="Perrodou E."/>
            <person name="Carapito C."/>
            <person name="Deshayes C."/>
            <person name="Reyrat J.-M."/>
            <person name="Van Dorsselaer A."/>
            <person name="Poch O."/>
            <person name="Schaeffer C."/>
            <person name="Lecompte O."/>
        </authorList>
    </citation>
    <scope>NUCLEOTIDE SEQUENCE [LARGE SCALE GENOMIC DNA]</scope>
    <source>
        <strain>ATCC 700084 / mc(2)155</strain>
    </source>
</reference>
<reference key="4">
    <citation type="journal article" date="2010" name="Mol. Microbiol.">
        <title>Deletion of dop in Mycobacterium smegmatis abolishes pupylation of protein substrates in vivo.</title>
        <authorList>
            <person name="Imkamp F."/>
            <person name="Rosenberger T."/>
            <person name="Striebel F."/>
            <person name="Keller P.M."/>
            <person name="Amstutz B."/>
            <person name="Sander P."/>
            <person name="Weber-Ban E."/>
        </authorList>
    </citation>
    <scope>FUNCTION AS PUP DEAMIDASE</scope>
    <scope>CATALYTIC ACTIVITY</scope>
    <scope>ROLE IN THE PROTEASOME DEGRADATION PATHWAY</scope>
    <scope>COFACTOR</scope>
    <scope>DISRUPTION PHENOTYPE</scope>
    <scope>MUTAGENESIS OF GLU-10</scope>
</reference>
<accession>A0QZ49</accession>
<accession>I7FFQ8</accession>
<keyword id="KW-0067">ATP-binding</keyword>
<keyword id="KW-0378">Hydrolase</keyword>
<keyword id="KW-0460">Magnesium</keyword>
<keyword id="KW-0479">Metal-binding</keyword>
<keyword id="KW-0547">Nucleotide-binding</keyword>
<keyword id="KW-1185">Reference proteome</keyword>
<feature type="chain" id="PRO_0000395858" description="Pup deamidase/depupylase">
    <location>
        <begin position="1"/>
        <end position="498"/>
    </location>
</feature>
<feature type="active site" description="Proton acceptor" evidence="1">
    <location>
        <position position="95"/>
    </location>
</feature>
<feature type="binding site" evidence="3">
    <location>
        <begin position="6"/>
        <end position="10"/>
    </location>
    <ligand>
        <name>ATP</name>
        <dbReference type="ChEBI" id="CHEBI:30616"/>
    </ligand>
</feature>
<feature type="binding site" evidence="1">
    <location>
        <position position="8"/>
    </location>
    <ligand>
        <name>Mg(2+)</name>
        <dbReference type="ChEBI" id="CHEBI:18420"/>
        <label>1</label>
    </ligand>
</feature>
<feature type="binding site" evidence="1">
    <location>
        <position position="8"/>
    </location>
    <ligand>
        <name>Mg(2+)</name>
        <dbReference type="ChEBI" id="CHEBI:18420"/>
        <label>2</label>
    </ligand>
</feature>
<feature type="binding site" evidence="1">
    <location>
        <position position="93"/>
    </location>
    <ligand>
        <name>Mg(2+)</name>
        <dbReference type="ChEBI" id="CHEBI:18420"/>
        <label>1</label>
    </ligand>
</feature>
<feature type="binding site" evidence="1">
    <location>
        <position position="100"/>
    </location>
    <ligand>
        <name>Mg(2+)</name>
        <dbReference type="ChEBI" id="CHEBI:18420"/>
        <label>1</label>
    </ligand>
</feature>
<feature type="binding site" evidence="1">
    <location>
        <begin position="102"/>
        <end position="103"/>
    </location>
    <ligand>
        <name>ATP</name>
        <dbReference type="ChEBI" id="CHEBI:30616"/>
    </ligand>
</feature>
<feature type="binding site" evidence="1">
    <location>
        <position position="156"/>
    </location>
    <ligand>
        <name>Mg(2+)</name>
        <dbReference type="ChEBI" id="CHEBI:18420"/>
        <label>2</label>
    </ligand>
</feature>
<feature type="binding site" evidence="1">
    <location>
        <position position="158"/>
    </location>
    <ligand>
        <name>ATP</name>
        <dbReference type="ChEBI" id="CHEBI:30616"/>
    </ligand>
</feature>
<feature type="binding site" evidence="1">
    <location>
        <position position="240"/>
    </location>
    <ligand>
        <name>ATP</name>
        <dbReference type="ChEBI" id="CHEBI:30616"/>
    </ligand>
</feature>
<feature type="binding site" evidence="1">
    <location>
        <position position="242"/>
    </location>
    <ligand>
        <name>Mg(2+)</name>
        <dbReference type="ChEBI" id="CHEBI:18420"/>
        <label>2</label>
    </ligand>
</feature>
<feature type="mutagenesis site" description="Loss of Pup deamidase activity both in vivo and in vitro." evidence="2">
    <original>E</original>
    <variation>A</variation>
    <location>
        <position position="10"/>
    </location>
</feature>
<comment type="function">
    <text evidence="2">Specifically catalyzes the deamidation of the C-terminal glutamine of the prokaryotic ubiquitin-like protein Pup to glutamate, thereby rendering Pup competent for conjugation. Probably also displays depupylase (DPUP) activity, removing conjugated Pup from target proteins; thus may be involved in the recycling of Pup and may function similarly to deubiquitinases (DUBs) in eukaryotes to prevent or promote proteasomal degradation of certain proteins.</text>
</comment>
<comment type="catalytic activity">
    <reaction evidence="2">
        <text>[prokaryotic ubiquitin-like protein]-C-terminal-L-glutamine + H2O = [prokaryotic ubiquitin-like protein]-C-terminal-L-glutamate + NH4(+)</text>
        <dbReference type="Rhea" id="RHEA:47952"/>
        <dbReference type="Rhea" id="RHEA-COMP:11959"/>
        <dbReference type="Rhea" id="RHEA-COMP:11960"/>
        <dbReference type="ChEBI" id="CHEBI:15377"/>
        <dbReference type="ChEBI" id="CHEBI:28938"/>
        <dbReference type="ChEBI" id="CHEBI:78525"/>
        <dbReference type="ChEBI" id="CHEBI:88115"/>
        <dbReference type="EC" id="3.5.1.119"/>
    </reaction>
</comment>
<comment type="cofactor">
    <cofactor evidence="2">
        <name>ATP</name>
        <dbReference type="ChEBI" id="CHEBI:30616"/>
    </cofactor>
    <text evidence="2">ATP is required for the deamidation reaction but is not hydrolyzed during this reaction.</text>
</comment>
<comment type="pathway">
    <text>Protein degradation; proteasomal Pup-dependent pathway.</text>
</comment>
<comment type="disruption phenotype">
    <text evidence="2">Pupylation is severely impaired and the steady-state levels of the two known proteasomal substrates FabD and PanB are drastically increased.</text>
</comment>
<comment type="miscellaneous">
    <text>Is the only enzyme acting as a deamidase of Pup during pupylation.</text>
</comment>
<comment type="similarity">
    <text evidence="3">Belongs to the Pup ligase/Pup deamidase family. Pup deamidase subfamily.</text>
</comment>
<evidence type="ECO:0000250" key="1"/>
<evidence type="ECO:0000269" key="2">
    <source>
    </source>
</evidence>
<evidence type="ECO:0000305" key="3"/>
<organism>
    <name type="scientific">Mycolicibacterium smegmatis (strain ATCC 700084 / mc(2)155)</name>
    <name type="common">Mycobacterium smegmatis</name>
    <dbReference type="NCBI Taxonomy" id="246196"/>
    <lineage>
        <taxon>Bacteria</taxon>
        <taxon>Bacillati</taxon>
        <taxon>Actinomycetota</taxon>
        <taxon>Actinomycetes</taxon>
        <taxon>Mycobacteriales</taxon>
        <taxon>Mycobacteriaceae</taxon>
        <taxon>Mycolicibacterium</taxon>
    </lineage>
</organism>
<proteinExistence type="evidence at protein level"/>
<gene>
    <name type="primary">dop</name>
    <name type="ordered locus">MSMEG_3897</name>
    <name type="ordered locus">MSMEI_3807</name>
</gene>
<name>DOP_MYCS2</name>
<sequence length="498" mass="54574">MQRIIGTEVEYGISSPSDPTANPILTSTQAVLAYAAAAGIQRAKRTRWDYEVESPLRDARGFDLSRSSGPPPIVDADEVGAANMILTNGARLYVDHAHPEYSAPECTDPMDAVIWDKAGERVMEAAARHVASVPGAAKLQLYKNNVDGKGASYGSHENYLMSRQTPFSAVIAGLTPFMVSRQVVTGSGRVGIGPSGDEPGFQLSQRADYIEVEVGLETTLKRGIINTRDEPHADADKYRRLHVIIGDANLAETSTYLKLGTTSLVLDLIEEGVDLSDLALARPVHAVHVISRDPSLRATVALADGRELTALALQRIYLDRVAKLVDSRDPDPRASHVIETWANVLDLLERDPMECAEILDWPAKLRLLEGFRQRENLTWQAPRLHLVDLQYSDVRLDKGLYNRLVARGSMKRLVTEQQVLDAVENPPTDTRAYFRGECLRRFGADIAAASWDSVIFDLGGDSLVRIPTLEPLRGSKAHVGALLDSVDSAVELVEQLTN</sequence>